<proteinExistence type="inferred from homology"/>
<feature type="chain" id="PRO_1000012811" description="ATP-dependent protease ATPase subunit HslU">
    <location>
        <begin position="1"/>
        <end position="443"/>
    </location>
</feature>
<feature type="binding site" evidence="1">
    <location>
        <position position="18"/>
    </location>
    <ligand>
        <name>ATP</name>
        <dbReference type="ChEBI" id="CHEBI:30616"/>
    </ligand>
</feature>
<feature type="binding site" evidence="1">
    <location>
        <begin position="60"/>
        <end position="65"/>
    </location>
    <ligand>
        <name>ATP</name>
        <dbReference type="ChEBI" id="CHEBI:30616"/>
    </ligand>
</feature>
<feature type="binding site" evidence="1">
    <location>
        <position position="256"/>
    </location>
    <ligand>
        <name>ATP</name>
        <dbReference type="ChEBI" id="CHEBI:30616"/>
    </ligand>
</feature>
<feature type="binding site" evidence="1">
    <location>
        <position position="321"/>
    </location>
    <ligand>
        <name>ATP</name>
        <dbReference type="ChEBI" id="CHEBI:30616"/>
    </ligand>
</feature>
<feature type="binding site" evidence="1">
    <location>
        <position position="393"/>
    </location>
    <ligand>
        <name>ATP</name>
        <dbReference type="ChEBI" id="CHEBI:30616"/>
    </ligand>
</feature>
<reference key="1">
    <citation type="journal article" date="2005" name="Nucleic Acids Res.">
        <title>Genome dynamics and diversity of Shigella species, the etiologic agents of bacillary dysentery.</title>
        <authorList>
            <person name="Yang F."/>
            <person name="Yang J."/>
            <person name="Zhang X."/>
            <person name="Chen L."/>
            <person name="Jiang Y."/>
            <person name="Yan Y."/>
            <person name="Tang X."/>
            <person name="Wang J."/>
            <person name="Xiong Z."/>
            <person name="Dong J."/>
            <person name="Xue Y."/>
            <person name="Zhu Y."/>
            <person name="Xu X."/>
            <person name="Sun L."/>
            <person name="Chen S."/>
            <person name="Nie H."/>
            <person name="Peng J."/>
            <person name="Xu J."/>
            <person name="Wang Y."/>
            <person name="Yuan Z."/>
            <person name="Wen Y."/>
            <person name="Yao Z."/>
            <person name="Shen Y."/>
            <person name="Qiang B."/>
            <person name="Hou Y."/>
            <person name="Yu J."/>
            <person name="Jin Q."/>
        </authorList>
    </citation>
    <scope>NUCLEOTIDE SEQUENCE [LARGE SCALE GENOMIC DNA]</scope>
    <source>
        <strain>Sd197</strain>
    </source>
</reference>
<dbReference type="EMBL" id="CP000034">
    <property type="protein sequence ID" value="ABB63751.1"/>
    <property type="molecule type" value="Genomic_DNA"/>
</dbReference>
<dbReference type="RefSeq" id="WP_001293350.1">
    <property type="nucleotide sequence ID" value="NC_007606.1"/>
</dbReference>
<dbReference type="RefSeq" id="YP_405242.1">
    <property type="nucleotide sequence ID" value="NC_007606.1"/>
</dbReference>
<dbReference type="SMR" id="Q32AA4"/>
<dbReference type="STRING" id="300267.SDY_3806"/>
<dbReference type="EnsemblBacteria" id="ABB63751">
    <property type="protein sequence ID" value="ABB63751"/>
    <property type="gene ID" value="SDY_3806"/>
</dbReference>
<dbReference type="KEGG" id="sdy:SDY_3806"/>
<dbReference type="PATRIC" id="fig|300267.13.peg.4496"/>
<dbReference type="HOGENOM" id="CLU_033123_0_0_6"/>
<dbReference type="Proteomes" id="UP000002716">
    <property type="component" value="Chromosome"/>
</dbReference>
<dbReference type="GO" id="GO:0009376">
    <property type="term" value="C:HslUV protease complex"/>
    <property type="evidence" value="ECO:0007669"/>
    <property type="project" value="UniProtKB-UniRule"/>
</dbReference>
<dbReference type="GO" id="GO:0005524">
    <property type="term" value="F:ATP binding"/>
    <property type="evidence" value="ECO:0007669"/>
    <property type="project" value="UniProtKB-UniRule"/>
</dbReference>
<dbReference type="GO" id="GO:0016887">
    <property type="term" value="F:ATP hydrolysis activity"/>
    <property type="evidence" value="ECO:0007669"/>
    <property type="project" value="InterPro"/>
</dbReference>
<dbReference type="GO" id="GO:0008233">
    <property type="term" value="F:peptidase activity"/>
    <property type="evidence" value="ECO:0007669"/>
    <property type="project" value="InterPro"/>
</dbReference>
<dbReference type="GO" id="GO:0036402">
    <property type="term" value="F:proteasome-activating activity"/>
    <property type="evidence" value="ECO:0007669"/>
    <property type="project" value="UniProtKB-UniRule"/>
</dbReference>
<dbReference type="GO" id="GO:0043335">
    <property type="term" value="P:protein unfolding"/>
    <property type="evidence" value="ECO:0007669"/>
    <property type="project" value="UniProtKB-UniRule"/>
</dbReference>
<dbReference type="GO" id="GO:0051603">
    <property type="term" value="P:proteolysis involved in protein catabolic process"/>
    <property type="evidence" value="ECO:0007669"/>
    <property type="project" value="TreeGrafter"/>
</dbReference>
<dbReference type="CDD" id="cd19498">
    <property type="entry name" value="RecA-like_HslU"/>
    <property type="match status" value="1"/>
</dbReference>
<dbReference type="FunFam" id="1.10.8.10:FF:000012">
    <property type="entry name" value="ATP-dependent protease ATPase subunit HslU"/>
    <property type="match status" value="1"/>
</dbReference>
<dbReference type="FunFam" id="1.10.8.10:FF:000028">
    <property type="entry name" value="ATP-dependent protease ATPase subunit HslU"/>
    <property type="match status" value="1"/>
</dbReference>
<dbReference type="FunFam" id="1.10.8.60:FF:000027">
    <property type="entry name" value="ATP-dependent protease ATPase subunit HslU"/>
    <property type="match status" value="1"/>
</dbReference>
<dbReference type="FunFam" id="3.40.50.300:FF:000213">
    <property type="entry name" value="ATP-dependent protease ATPase subunit HslU"/>
    <property type="match status" value="1"/>
</dbReference>
<dbReference type="FunFam" id="3.40.50.300:FF:000220">
    <property type="entry name" value="ATP-dependent protease ATPase subunit HslU"/>
    <property type="match status" value="1"/>
</dbReference>
<dbReference type="Gene3D" id="1.10.8.60">
    <property type="match status" value="1"/>
</dbReference>
<dbReference type="Gene3D" id="1.10.8.10">
    <property type="entry name" value="DNA helicase RuvA subunit, C-terminal domain"/>
    <property type="match status" value="2"/>
</dbReference>
<dbReference type="Gene3D" id="3.40.50.300">
    <property type="entry name" value="P-loop containing nucleotide triphosphate hydrolases"/>
    <property type="match status" value="1"/>
</dbReference>
<dbReference type="HAMAP" id="MF_00249">
    <property type="entry name" value="HslU"/>
    <property type="match status" value="1"/>
</dbReference>
<dbReference type="InterPro" id="IPR003593">
    <property type="entry name" value="AAA+_ATPase"/>
</dbReference>
<dbReference type="InterPro" id="IPR050052">
    <property type="entry name" value="ATP-dep_Clp_protease_ClpX"/>
</dbReference>
<dbReference type="InterPro" id="IPR003959">
    <property type="entry name" value="ATPase_AAA_core"/>
</dbReference>
<dbReference type="InterPro" id="IPR019489">
    <property type="entry name" value="Clp_ATPase_C"/>
</dbReference>
<dbReference type="InterPro" id="IPR004491">
    <property type="entry name" value="HslU"/>
</dbReference>
<dbReference type="InterPro" id="IPR027417">
    <property type="entry name" value="P-loop_NTPase"/>
</dbReference>
<dbReference type="NCBIfam" id="TIGR00390">
    <property type="entry name" value="hslU"/>
    <property type="match status" value="1"/>
</dbReference>
<dbReference type="NCBIfam" id="NF003544">
    <property type="entry name" value="PRK05201.1"/>
    <property type="match status" value="1"/>
</dbReference>
<dbReference type="PANTHER" id="PTHR48102">
    <property type="entry name" value="ATP-DEPENDENT CLP PROTEASE ATP-BINDING SUBUNIT CLPX-LIKE, MITOCHONDRIAL-RELATED"/>
    <property type="match status" value="1"/>
</dbReference>
<dbReference type="PANTHER" id="PTHR48102:SF3">
    <property type="entry name" value="ATP-DEPENDENT PROTEASE ATPASE SUBUNIT HSLU"/>
    <property type="match status" value="1"/>
</dbReference>
<dbReference type="Pfam" id="PF00004">
    <property type="entry name" value="AAA"/>
    <property type="match status" value="1"/>
</dbReference>
<dbReference type="Pfam" id="PF07724">
    <property type="entry name" value="AAA_2"/>
    <property type="match status" value="1"/>
</dbReference>
<dbReference type="SMART" id="SM00382">
    <property type="entry name" value="AAA"/>
    <property type="match status" value="1"/>
</dbReference>
<dbReference type="SMART" id="SM01086">
    <property type="entry name" value="ClpB_D2-small"/>
    <property type="match status" value="1"/>
</dbReference>
<dbReference type="SUPFAM" id="SSF52540">
    <property type="entry name" value="P-loop containing nucleoside triphosphate hydrolases"/>
    <property type="match status" value="1"/>
</dbReference>
<protein>
    <recommendedName>
        <fullName evidence="1">ATP-dependent protease ATPase subunit HslU</fullName>
    </recommendedName>
    <alternativeName>
        <fullName evidence="1">Heat shock protein HslU</fullName>
    </alternativeName>
    <alternativeName>
        <fullName evidence="1">Unfoldase HslU</fullName>
    </alternativeName>
</protein>
<keyword id="KW-0067">ATP-binding</keyword>
<keyword id="KW-0143">Chaperone</keyword>
<keyword id="KW-0963">Cytoplasm</keyword>
<keyword id="KW-0547">Nucleotide-binding</keyword>
<keyword id="KW-1185">Reference proteome</keyword>
<keyword id="KW-0346">Stress response</keyword>
<gene>
    <name evidence="1" type="primary">hslU</name>
    <name type="ordered locus">SDY_3806</name>
</gene>
<name>HSLU_SHIDS</name>
<comment type="function">
    <text evidence="1">ATPase subunit of a proteasome-like degradation complex; this subunit has chaperone activity. The binding of ATP and its subsequent hydrolysis by HslU are essential for unfolding of protein substrates subsequently hydrolyzed by HslV. HslU recognizes the N-terminal part of its protein substrates and unfolds these before they are guided to HslV for hydrolysis.</text>
</comment>
<comment type="subunit">
    <text evidence="1">A double ring-shaped homohexamer of HslV is capped on each side by a ring-shaped HslU homohexamer. The assembly of the HslU/HslV complex is dependent on binding of ATP.</text>
</comment>
<comment type="subcellular location">
    <subcellularLocation>
        <location evidence="1">Cytoplasm</location>
    </subcellularLocation>
</comment>
<comment type="induction">
    <text evidence="1">By heat shock.</text>
</comment>
<comment type="similarity">
    <text evidence="1">Belongs to the ClpX chaperone family. HslU subfamily.</text>
</comment>
<organism>
    <name type="scientific">Shigella dysenteriae serotype 1 (strain Sd197)</name>
    <dbReference type="NCBI Taxonomy" id="300267"/>
    <lineage>
        <taxon>Bacteria</taxon>
        <taxon>Pseudomonadati</taxon>
        <taxon>Pseudomonadota</taxon>
        <taxon>Gammaproteobacteria</taxon>
        <taxon>Enterobacterales</taxon>
        <taxon>Enterobacteriaceae</taxon>
        <taxon>Shigella</taxon>
    </lineage>
</organism>
<accession>Q32AA4</accession>
<sequence length="443" mass="49560">MSEMTPREIVSELDKHIIGQDNAKRSVAIALRNRWRRMQLNEELRHEVTPKNILMIGPTGVGKTEIARRLAKLANAPLIKVEATKFTEVGYVGKEVDSIIRDLTDAAVKMVRVQAIEKNRYRAEELAEERILDVLIPPAKNNWGQTEQQQEPSAARQAFRKKLREGQLDDKEIEIDLAAAPMGVEIMAPPGMEEMTSQLQSMFQNLGGQKQKARKLKIKDAMKLLIEEEAAKLVNPEELKQDAIDAVEQHGIVFIDEIDKICKRGESSGPDVSREGVQRDLLPLVEGCTVSTKHGMVKTDHILFIASGAFQIAKPSDLIPELQGRLPIRVELQALTTSDFERILTEPNASITVQYKALMATEGVNIEFTDSGIKRIAEAAWQVNESTENIGARRLHTVLERLMEEISYDASDLSGQNITIDADYVSKHLDALVADEDLSRFIL</sequence>
<evidence type="ECO:0000255" key="1">
    <source>
        <dbReference type="HAMAP-Rule" id="MF_00249"/>
    </source>
</evidence>